<evidence type="ECO:0000250" key="1"/>
<evidence type="ECO:0000250" key="2">
    <source>
        <dbReference type="UniProtKB" id="P02522"/>
    </source>
</evidence>
<evidence type="ECO:0000255" key="3">
    <source>
        <dbReference type="PROSITE-ProRule" id="PRU00028"/>
    </source>
</evidence>
<evidence type="ECO:0000305" key="4"/>
<name>CRBB2_MESAU</name>
<dbReference type="EMBL" id="X94745">
    <property type="protein sequence ID" value="CAA64371.1"/>
    <property type="molecule type" value="mRNA"/>
</dbReference>
<dbReference type="PIR" id="JC4964">
    <property type="entry name" value="JC4964"/>
</dbReference>
<dbReference type="RefSeq" id="NP_001268306.1">
    <property type="nucleotide sequence ID" value="NM_001281377.1"/>
</dbReference>
<dbReference type="SMR" id="P62698"/>
<dbReference type="STRING" id="10036.ENSMAUP00000015261"/>
<dbReference type="Ensembl" id="ENSMAUT00000019186">
    <property type="protein sequence ID" value="ENSMAUP00000015261"/>
    <property type="gene ID" value="ENSMAUG00000014782"/>
</dbReference>
<dbReference type="GeneID" id="101842717"/>
<dbReference type="KEGG" id="maua:101842717"/>
<dbReference type="CTD" id="1415"/>
<dbReference type="eggNOG" id="ENOG502QVM6">
    <property type="taxonomic scope" value="Eukaryota"/>
</dbReference>
<dbReference type="OrthoDB" id="8525367at2759"/>
<dbReference type="Proteomes" id="UP000189706">
    <property type="component" value="Unplaced"/>
</dbReference>
<dbReference type="GO" id="GO:0042802">
    <property type="term" value="F:identical protein binding"/>
    <property type="evidence" value="ECO:0007669"/>
    <property type="project" value="Ensembl"/>
</dbReference>
<dbReference type="GO" id="GO:0005212">
    <property type="term" value="F:structural constituent of eye lens"/>
    <property type="evidence" value="ECO:0007669"/>
    <property type="project" value="UniProtKB-KW"/>
</dbReference>
<dbReference type="GO" id="GO:0002088">
    <property type="term" value="P:lens development in camera-type eye"/>
    <property type="evidence" value="ECO:0007669"/>
    <property type="project" value="TreeGrafter"/>
</dbReference>
<dbReference type="GO" id="GO:0007601">
    <property type="term" value="P:visual perception"/>
    <property type="evidence" value="ECO:0007669"/>
    <property type="project" value="Ensembl"/>
</dbReference>
<dbReference type="FunFam" id="2.60.20.10:FF:000005">
    <property type="entry name" value="Crystallin, beta B1"/>
    <property type="match status" value="1"/>
</dbReference>
<dbReference type="FunFam" id="2.60.20.10:FF:000002">
    <property type="entry name" value="Crystallin, beta B2"/>
    <property type="match status" value="1"/>
</dbReference>
<dbReference type="Gene3D" id="2.60.20.10">
    <property type="entry name" value="Crystallins"/>
    <property type="match status" value="2"/>
</dbReference>
<dbReference type="InterPro" id="IPR050252">
    <property type="entry name" value="Beta/Gamma-Crystallin"/>
</dbReference>
<dbReference type="InterPro" id="IPR001064">
    <property type="entry name" value="Beta/gamma_crystallin"/>
</dbReference>
<dbReference type="InterPro" id="IPR011024">
    <property type="entry name" value="G_crystallin-like"/>
</dbReference>
<dbReference type="PANTHER" id="PTHR11818:SF11">
    <property type="entry name" value="BETA-CRYSTALLIN B2"/>
    <property type="match status" value="1"/>
</dbReference>
<dbReference type="PANTHER" id="PTHR11818">
    <property type="entry name" value="BETA/GAMMA CRYSTALLIN"/>
    <property type="match status" value="1"/>
</dbReference>
<dbReference type="Pfam" id="PF00030">
    <property type="entry name" value="Crystall"/>
    <property type="match status" value="2"/>
</dbReference>
<dbReference type="PRINTS" id="PR01367">
    <property type="entry name" value="BGCRYSTALLIN"/>
</dbReference>
<dbReference type="SMART" id="SM00247">
    <property type="entry name" value="XTALbg"/>
    <property type="match status" value="2"/>
</dbReference>
<dbReference type="SUPFAM" id="SSF49695">
    <property type="entry name" value="gamma-Crystallin-like"/>
    <property type="match status" value="1"/>
</dbReference>
<dbReference type="PROSITE" id="PS50915">
    <property type="entry name" value="CRYSTALLIN_BETA_GAMMA"/>
    <property type="match status" value="4"/>
</dbReference>
<protein>
    <recommendedName>
        <fullName>Beta-crystallin B2</fullName>
    </recommendedName>
    <alternativeName>
        <fullName>Beta-B2 crystallin</fullName>
    </alternativeName>
    <alternativeName>
        <fullName>Beta-crystallin Bp</fullName>
    </alternativeName>
</protein>
<accession>P62698</accession>
<accession>P19942</accession>
<accession>P26775</accession>
<gene>
    <name type="primary">CRYBB2</name>
</gene>
<keyword id="KW-0007">Acetylation</keyword>
<keyword id="KW-0273">Eye lens protein</keyword>
<keyword id="KW-1185">Reference proteome</keyword>
<keyword id="KW-0677">Repeat</keyword>
<proteinExistence type="evidence at transcript level"/>
<feature type="initiator methionine" description="Removed" evidence="2">
    <location>
        <position position="1"/>
    </location>
</feature>
<feature type="chain" id="PRO_0000057554" description="Beta-crystallin B2">
    <location>
        <begin position="2"/>
        <end position="205"/>
    </location>
</feature>
<feature type="domain" description="Beta/gamma crystallin 'Greek key' 1" evidence="3">
    <location>
        <begin position="17"/>
        <end position="56"/>
    </location>
</feature>
<feature type="domain" description="Beta/gamma crystallin 'Greek key' 2" evidence="3">
    <location>
        <begin position="57"/>
        <end position="101"/>
    </location>
</feature>
<feature type="domain" description="Beta/gamma crystallin 'Greek key' 3" evidence="3">
    <location>
        <begin position="107"/>
        <end position="148"/>
    </location>
</feature>
<feature type="domain" description="Beta/gamma crystallin 'Greek key' 4" evidence="3">
    <location>
        <begin position="149"/>
        <end position="191"/>
    </location>
</feature>
<feature type="region of interest" description="N-terminal arm">
    <location>
        <begin position="2"/>
        <end position="16"/>
    </location>
</feature>
<feature type="region of interest" description="Connecting peptide">
    <location>
        <begin position="102"/>
        <end position="106"/>
    </location>
</feature>
<feature type="region of interest" description="C-terminal arm">
    <location>
        <begin position="193"/>
        <end position="205"/>
    </location>
</feature>
<feature type="modified residue" description="N-acetylalanine" evidence="2">
    <location>
        <position position="2"/>
    </location>
</feature>
<sequence length="205" mass="23381">MASDHQTQAGKPQPLNPKIIIFEQENFQGHSHELSGPCPNLKETGMEKAGSVLVQAGPWVGYEQANCKGEQFVFEKGEYPRWDSWTSSRRTDSLSSLRPIKVDSQEHKIILYENPNFTGKKMEIVDDDVPSFHAHGYQEKVSSVRVQSGTWVGYQYPGYRGLQYLLEKGDYKDNSDFGAPHPQVQSVRRIRDMQWHQRGAFHPSS</sequence>
<reference key="1">
    <citation type="journal article" date="1996" name="Gene">
        <title>Sequence analysis of the beta B2-crystallin cDNA of hamster containing a domain conserved among vertebrates.</title>
        <authorList>
            <person name="Zarbalis K."/>
            <person name="Chatterjee B."/>
            <person name="Loester J."/>
            <person name="Werner T."/>
            <person name="Graw J."/>
        </authorList>
    </citation>
    <scope>NUCLEOTIDE SEQUENCE [MRNA]</scope>
    <source>
        <tissue>Lens</tissue>
    </source>
</reference>
<comment type="function">
    <text>Crystallins are the dominant structural components of the vertebrate eye lens.</text>
</comment>
<comment type="subunit">
    <text evidence="1">Homo/heterodimer, or complexes of higher-order. The structure of beta-crystallin oligomers seems to be stabilized through interactions between the N-terminal arms (By similarity).</text>
</comment>
<comment type="domain">
    <text>Has a two-domain beta-structure, folded into four very similar Greek key motifs.</text>
</comment>
<comment type="similarity">
    <text evidence="4">Belongs to the beta/gamma-crystallin family.</text>
</comment>
<organism>
    <name type="scientific">Mesocricetus auratus</name>
    <name type="common">Golden hamster</name>
    <dbReference type="NCBI Taxonomy" id="10036"/>
    <lineage>
        <taxon>Eukaryota</taxon>
        <taxon>Metazoa</taxon>
        <taxon>Chordata</taxon>
        <taxon>Craniata</taxon>
        <taxon>Vertebrata</taxon>
        <taxon>Euteleostomi</taxon>
        <taxon>Mammalia</taxon>
        <taxon>Eutheria</taxon>
        <taxon>Euarchontoglires</taxon>
        <taxon>Glires</taxon>
        <taxon>Rodentia</taxon>
        <taxon>Myomorpha</taxon>
        <taxon>Muroidea</taxon>
        <taxon>Cricetidae</taxon>
        <taxon>Cricetinae</taxon>
        <taxon>Mesocricetus</taxon>
    </lineage>
</organism>